<organismHost>
    <name type="scientific">Homo sapiens</name>
    <name type="common">Human</name>
    <dbReference type="NCBI Taxonomy" id="9606"/>
</organismHost>
<sequence>MALFLARHTLSGTGAGCHGRGPAPDVSEVDLTLQALGERGFSRLLDLGLACLDLSYVEMREFVVWGRPPASEAAVASTPGSLFRSHSSAYWLSEVERPGGLVRWARSQTSPSSLTLAPHLGPSLLSLSVVTGGGCGAVAFCNAFFLAYFLVVRSVFPAFSDRIAAWICDRSPFCENTRAVARGYRGLVKRFLAFVFERSSYDPPLLRQNSRPVERCFAIKNYVPGLDSQSCVTVPSFSRWAQSHASELDPREIRDRVTPATAPSFVADHASALLASLQKKASDTPCGNPIQWMWYRLLVNSCLRSAHCLLPIPAVSEGGRKTGGGVGEELVGAGGPCLSRDVFVAIVSRNVLSCLLNVPAAGPRAYKCFRSHASRPVSGPDYPPLAVFCMDCGYCLNFGKQTGVGGRLNSFRPTLQFYPRDQKEKHVLTCHASGRVYCSNCGSAAVGCQRLAEPPSARSGWRPRIRAVLPHNAAYELDRGSRLLDAIIPCLGPDRTCMRPVVLRGVTVRQLLYLTLRTEARAVCSICQQRQAPEDARDEPHLFSSCLEVELPPGERCAGCRLYQTRYGTPAAQAHPPGEAGGGFSRQSPAS</sequence>
<evidence type="ECO:0000256" key="1">
    <source>
        <dbReference type="SAM" id="MobiDB-lite"/>
    </source>
</evidence>
<evidence type="ECO:0000269" key="2">
    <source>
    </source>
</evidence>
<evidence type="ECO:0000269" key="3">
    <source>
    </source>
</evidence>
<evidence type="ECO:0000303" key="4">
    <source>
    </source>
</evidence>
<evidence type="ECO:0000305" key="5"/>
<reference key="1">
    <citation type="journal article" date="1984" name="Nature">
        <title>DNA sequence and expression of the B95-8 Epstein-Barr virus genome.</title>
        <authorList>
            <person name="Baer R."/>
            <person name="Bankier A.T."/>
            <person name="Biggin M.D."/>
            <person name="Deininger P.L."/>
            <person name="Farrell P.J."/>
            <person name="Gibson T.J."/>
            <person name="Hatfull G."/>
            <person name="Hudson G.S."/>
            <person name="Satchwell S.C."/>
            <person name="Seguin C."/>
            <person name="Tuffnell P.S."/>
            <person name="Barrell B.G."/>
        </authorList>
    </citation>
    <scope>NUCLEOTIDE SEQUENCE [LARGE SCALE GENOMIC DNA]</scope>
</reference>
<reference key="2">
    <citation type="journal article" date="2003" name="Virology">
        <title>Updated Epstein-Barr virus (EBV) DNA sequence and analysis of a promoter for the BART (CST, BARF0) RNAs of EBV.</title>
        <authorList>
            <person name="de Jesus O."/>
            <person name="Smith P.R."/>
            <person name="Spender L.C."/>
            <person name="Elgueta Karstegl C."/>
            <person name="Niller H.H."/>
            <person name="Huang D."/>
            <person name="Farrell P.J."/>
        </authorList>
    </citation>
    <scope>GENOME REANNOTATION</scope>
</reference>
<reference key="3">
    <citation type="journal article" date="2014" name="J. Virol.">
        <title>Epstein-Barr virus late gene transcription depends on the assembly of a virus-specific preinitiation complex.</title>
        <authorList>
            <person name="Aubry V."/>
            <person name="Mure F."/>
            <person name="Mariame B."/>
            <person name="Deschamps T."/>
            <person name="Wyrwicz L.S."/>
            <person name="Manet E."/>
            <person name="Gruffat H."/>
        </authorList>
    </citation>
    <scope>FUNCTION</scope>
</reference>
<reference key="4">
    <citation type="journal article" date="2019" name="PLoS Pathog.">
        <title>A single phosphoacceptor residue in BGLF3 is essential for transcription of Epstein-Barr virus late genes.</title>
        <authorList>
            <person name="Li J."/>
            <person name="Walsh A."/>
            <person name="Lam T.T."/>
            <person name="Delecluse H.J."/>
            <person name="El-Guindy A."/>
        </authorList>
    </citation>
    <scope>IDENTIFICATION IN A COMPLEX WITH BGLF3 AND BVLF1</scope>
    <scope>FUNCTION</scope>
</reference>
<dbReference type="EMBL" id="V01555">
    <property type="protein sequence ID" value="CAA24880.1"/>
    <property type="status" value="ALT_INIT"/>
    <property type="molecule type" value="Genomic_DNA"/>
</dbReference>
<dbReference type="EMBL" id="AJ507799">
    <property type="protein sequence ID" value="CAD53400.1"/>
    <property type="molecule type" value="Genomic_DNA"/>
</dbReference>
<dbReference type="RefSeq" id="YP_401650.1">
    <property type="nucleotide sequence ID" value="NC_007605.1"/>
</dbReference>
<dbReference type="DNASU" id="3783700"/>
<dbReference type="GeneID" id="3783700"/>
<dbReference type="KEGG" id="vg:3783700"/>
<dbReference type="Proteomes" id="UP000153037">
    <property type="component" value="Segment"/>
</dbReference>
<dbReference type="GO" id="GO:0019033">
    <property type="term" value="C:viral tegument"/>
    <property type="evidence" value="ECO:0007669"/>
    <property type="project" value="InterPro"/>
</dbReference>
<dbReference type="GO" id="GO:0016032">
    <property type="term" value="P:viral process"/>
    <property type="evidence" value="ECO:0007669"/>
    <property type="project" value="InterPro"/>
</dbReference>
<dbReference type="InterPro" id="IPR004339">
    <property type="entry name" value="UL49"/>
</dbReference>
<dbReference type="Pfam" id="PF03117">
    <property type="entry name" value="Herpes_UL49_1"/>
    <property type="match status" value="1"/>
</dbReference>
<proteinExistence type="evidence at protein level"/>
<name>BFRF2_EBVB9</name>
<feature type="chain" id="PRO_0000116206" description="Late gene expression regulator BFRF2">
    <location>
        <begin position="1"/>
        <end position="591"/>
    </location>
</feature>
<feature type="region of interest" description="Disordered" evidence="1">
    <location>
        <begin position="571"/>
        <end position="591"/>
    </location>
</feature>
<gene>
    <name type="ORF">BFRF2</name>
</gene>
<keyword id="KW-0244">Early protein</keyword>
<keyword id="KW-1185">Reference proteome</keyword>
<comment type="function">
    <text evidence="2 3">Part of the viral pre-initiation complex (vPIC) that is responsible for the expression of vPIC-dependent late genes (PubMed:25165108, PubMed:31461506). vPIC is composed of at least BcRF1 that binds the viral TATT box, BDLF3.5, BDLF4, BFRF2, BGLF3, BGLF4 and BVLF1 (PubMed:25165108).</text>
</comment>
<comment type="subunit">
    <text evidence="3">Part of a trimeric complex composed of BGLF3, BFRF2 and BVLF1.</text>
</comment>
<comment type="similarity">
    <text evidence="5">Belongs to the Epstein-Barr virus BFRF2 family.</text>
</comment>
<comment type="sequence caution" evidence="5">
    <conflict type="erroneous initiation">
        <sequence resource="EMBL-CDS" id="CAA24880"/>
    </conflict>
</comment>
<organism>
    <name type="scientific">Epstein-Barr virus (strain B95-8)</name>
    <name type="common">HHV-4</name>
    <name type="synonym">Human herpesvirus 4</name>
    <dbReference type="NCBI Taxonomy" id="10377"/>
    <lineage>
        <taxon>Viruses</taxon>
        <taxon>Duplodnaviria</taxon>
        <taxon>Heunggongvirae</taxon>
        <taxon>Peploviricota</taxon>
        <taxon>Herviviricetes</taxon>
        <taxon>Herpesvirales</taxon>
        <taxon>Orthoherpesviridae</taxon>
        <taxon>Gammaherpesvirinae</taxon>
        <taxon>Lymphocryptovirus</taxon>
        <taxon>Lymphocryptovirus humangamma4</taxon>
        <taxon>Epstein-Barr virus (strain GD1)</taxon>
    </lineage>
</organism>
<accession>P14347</accession>
<accession>Q777G6</accession>
<protein>
    <recommendedName>
        <fullName evidence="4">Late gene expression regulator BFRF2</fullName>
    </recommendedName>
</protein>